<dbReference type="GO" id="GO:0009288">
    <property type="term" value="C:bacterial-type flagellum"/>
    <property type="evidence" value="ECO:0007669"/>
    <property type="project" value="UniProtKB-SubCell"/>
</dbReference>
<dbReference type="GO" id="GO:0005576">
    <property type="term" value="C:extracellular region"/>
    <property type="evidence" value="ECO:0007669"/>
    <property type="project" value="UniProtKB-SubCell"/>
</dbReference>
<name>FLA1_BACCE</name>
<protein>
    <recommendedName>
        <fullName>Flagellin</fullName>
    </recommendedName>
</protein>
<sequence length="10" mass="1193">MRINTNINSM</sequence>
<proteinExistence type="evidence at protein level"/>
<feature type="chain" id="PRO_0000310834" description="Flagellin">
    <location>
        <begin position="1"/>
        <end position="10" status="greater than"/>
    </location>
</feature>
<feature type="non-terminal residue" evidence="3">
    <location>
        <position position="10"/>
    </location>
</feature>
<keyword id="KW-0975">Bacterial flagellum</keyword>
<keyword id="KW-0903">Direct protein sequencing</keyword>
<keyword id="KW-0964">Secreted</keyword>
<reference evidence="4" key="1">
    <citation type="submission" date="2007-10" db="UniProtKB">
        <title>Overproduction of flagellin production in presence of nickel identified in Bacillus.</title>
        <authorList>
            <person name="Shoeb E."/>
            <person name="Ahmed N."/>
            <person name="Warner P.J."/>
            <person name="Morgan S."/>
            <person name="Azeem M.K."/>
        </authorList>
    </citation>
    <scope>PROTEIN SEQUENCE</scope>
    <scope>INDUCTION</scope>
    <source>
        <strain evidence="2">CMG2K4</strain>
    </source>
</reference>
<accession>P85307</accession>
<comment type="function">
    <text evidence="4">Flagellin is the subunit protein which polymerizes to form the filaments of bacterial flagella.</text>
</comment>
<comment type="subcellular location">
    <subcellularLocation>
        <location>Secreted</location>
    </subcellularLocation>
    <subcellularLocation>
        <location>Bacterial flagellum</location>
    </subcellularLocation>
</comment>
<comment type="induction">
    <text evidence="2">By nickel.</text>
</comment>
<comment type="similarity">
    <text evidence="1">Belongs to the bacterial flagellin family.</text>
</comment>
<organism>
    <name type="scientific">Bacillus cereus</name>
    <dbReference type="NCBI Taxonomy" id="1396"/>
    <lineage>
        <taxon>Bacteria</taxon>
        <taxon>Bacillati</taxon>
        <taxon>Bacillota</taxon>
        <taxon>Bacilli</taxon>
        <taxon>Bacillales</taxon>
        <taxon>Bacillaceae</taxon>
        <taxon>Bacillus</taxon>
        <taxon>Bacillus cereus group</taxon>
    </lineage>
</organism>
<evidence type="ECO:0000255" key="1"/>
<evidence type="ECO:0000269" key="2">
    <source ref="1"/>
</evidence>
<evidence type="ECO:0000303" key="3">
    <source ref="1"/>
</evidence>
<evidence type="ECO:0000305" key="4"/>